<proteinExistence type="inferred from homology"/>
<reference key="1">
    <citation type="journal article" date="2005" name="Genome Res.">
        <title>Complete genome sequence of the hyperthermophilic archaeon Thermococcus kodakaraensis KOD1 and comparison with Pyrococcus genomes.</title>
        <authorList>
            <person name="Fukui T."/>
            <person name="Atomi H."/>
            <person name="Kanai T."/>
            <person name="Matsumi R."/>
            <person name="Fujiwara S."/>
            <person name="Imanaka T."/>
        </authorList>
    </citation>
    <scope>NUCLEOTIDE SEQUENCE [LARGE SCALE GENOMIC DNA]</scope>
    <source>
        <strain>ATCC BAA-918 / JCM 12380 / KOD1</strain>
    </source>
</reference>
<feature type="chain" id="PRO_0000084751" description="Proteasome-activating nucleotidase">
    <location>
        <begin position="1"/>
        <end position="397"/>
    </location>
</feature>
<feature type="region of interest" description="Docks into pockets in the proteasome alpha-ring to cause gate opening" evidence="1">
    <location>
        <begin position="395"/>
        <end position="397"/>
    </location>
</feature>
<feature type="coiled-coil region" evidence="1">
    <location>
        <begin position="15"/>
        <end position="58"/>
    </location>
</feature>
<feature type="binding site" evidence="1">
    <location>
        <begin position="182"/>
        <end position="187"/>
    </location>
    <ligand>
        <name>ATP</name>
        <dbReference type="ChEBI" id="CHEBI:30616"/>
    </ligand>
</feature>
<feature type="binding site" evidence="1">
    <location>
        <position position="321"/>
    </location>
    <ligand>
        <name>ATP</name>
        <dbReference type="ChEBI" id="CHEBI:30616"/>
    </ligand>
</feature>
<comment type="function">
    <text evidence="1">ATPase which is responsible for recognizing, binding, unfolding and translocation of substrate proteins into the archaeal 20S proteasome core particle. Is essential for opening the gate of the 20S proteasome via an interaction with its C-terminus, thereby allowing substrate entry and access to the site of proteolysis. Thus, the C-termini of the proteasomal ATPase function like a 'key in a lock' to induce gate opening and therefore regulate proteolysis. Unfolding activity requires energy from ATP hydrolysis, whereas ATP binding alone promotes ATPase-20S proteasome association which triggers gate opening, and supports translocation of unfolded substrates.</text>
</comment>
<comment type="subunit">
    <text evidence="1">Homohexamer. The hexameric complex has a two-ring architecture resembling a top hat that caps the 20S proteasome core at one or both ends. Upon ATP-binding, the C-terminus of PAN interacts with the alpha-rings of the proteasome core by binding to the intersubunit pockets.</text>
</comment>
<comment type="subcellular location">
    <subcellularLocation>
        <location evidence="1">Cytoplasm</location>
    </subcellularLocation>
</comment>
<comment type="domain">
    <text evidence="1">Consists of three main regions, an N-terminal coiled-coil domain that may assist in substrate recognition, an interdomain involved in PAN hexamerization, and a C-terminal ATPase domain of the AAA type.</text>
</comment>
<comment type="similarity">
    <text evidence="1">Belongs to the AAA ATPase family.</text>
</comment>
<name>PAN_THEKO</name>
<accession>Q5JHS5</accession>
<protein>
    <recommendedName>
        <fullName evidence="1">Proteasome-activating nucleotidase</fullName>
        <shortName evidence="1">PAN</shortName>
    </recommendedName>
    <alternativeName>
        <fullName evidence="1">Proteasomal ATPase</fullName>
    </alternativeName>
    <alternativeName>
        <fullName evidence="1">Proteasome regulatory ATPase</fullName>
    </alternativeName>
    <alternativeName>
        <fullName evidence="1">Proteasome regulatory particle</fullName>
    </alternativeName>
</protein>
<keyword id="KW-0067">ATP-binding</keyword>
<keyword id="KW-0143">Chaperone</keyword>
<keyword id="KW-0175">Coiled coil</keyword>
<keyword id="KW-0963">Cytoplasm</keyword>
<keyword id="KW-0547">Nucleotide-binding</keyword>
<keyword id="KW-0647">Proteasome</keyword>
<keyword id="KW-1185">Reference proteome</keyword>
<gene>
    <name evidence="1" type="primary">pan</name>
    <name type="ordered locus">TK2252</name>
</gene>
<dbReference type="EMBL" id="AP006878">
    <property type="protein sequence ID" value="BAD86441.1"/>
    <property type="molecule type" value="Genomic_DNA"/>
</dbReference>
<dbReference type="RefSeq" id="WP_011251202.1">
    <property type="nucleotide sequence ID" value="NC_006624.1"/>
</dbReference>
<dbReference type="SMR" id="Q5JHS5"/>
<dbReference type="FunCoup" id="Q5JHS5">
    <property type="interactions" value="118"/>
</dbReference>
<dbReference type="IntAct" id="Q5JHS5">
    <property type="interactions" value="1"/>
</dbReference>
<dbReference type="MINT" id="Q5JHS5"/>
<dbReference type="STRING" id="69014.TK2252"/>
<dbReference type="EnsemblBacteria" id="BAD86441">
    <property type="protein sequence ID" value="BAD86441"/>
    <property type="gene ID" value="TK2252"/>
</dbReference>
<dbReference type="GeneID" id="78448795"/>
<dbReference type="KEGG" id="tko:TK2252"/>
<dbReference type="PATRIC" id="fig|69014.16.peg.2207"/>
<dbReference type="eggNOG" id="arCOG01306">
    <property type="taxonomic scope" value="Archaea"/>
</dbReference>
<dbReference type="HOGENOM" id="CLU_000688_2_4_2"/>
<dbReference type="InParanoid" id="Q5JHS5"/>
<dbReference type="OrthoDB" id="77269at2157"/>
<dbReference type="PhylomeDB" id="Q5JHS5"/>
<dbReference type="Proteomes" id="UP000000536">
    <property type="component" value="Chromosome"/>
</dbReference>
<dbReference type="GO" id="GO:0005737">
    <property type="term" value="C:cytoplasm"/>
    <property type="evidence" value="ECO:0007669"/>
    <property type="project" value="UniProtKB-SubCell"/>
</dbReference>
<dbReference type="GO" id="GO:0008540">
    <property type="term" value="C:proteasome regulatory particle, base subcomplex"/>
    <property type="evidence" value="ECO:0000318"/>
    <property type="project" value="GO_Central"/>
</dbReference>
<dbReference type="GO" id="GO:0022623">
    <property type="term" value="C:proteasome-activating nucleotidase complex"/>
    <property type="evidence" value="ECO:0007669"/>
    <property type="project" value="UniProtKB-UniRule"/>
</dbReference>
<dbReference type="GO" id="GO:0005524">
    <property type="term" value="F:ATP binding"/>
    <property type="evidence" value="ECO:0007669"/>
    <property type="project" value="UniProtKB-UniRule"/>
</dbReference>
<dbReference type="GO" id="GO:0016887">
    <property type="term" value="F:ATP hydrolysis activity"/>
    <property type="evidence" value="ECO:0007669"/>
    <property type="project" value="UniProtKB-UniRule"/>
</dbReference>
<dbReference type="GO" id="GO:0036402">
    <property type="term" value="F:proteasome-activating activity"/>
    <property type="evidence" value="ECO:0000318"/>
    <property type="project" value="GO_Central"/>
</dbReference>
<dbReference type="GO" id="GO:0043161">
    <property type="term" value="P:proteasome-mediated ubiquitin-dependent protein catabolic process"/>
    <property type="evidence" value="ECO:0000318"/>
    <property type="project" value="GO_Central"/>
</dbReference>
<dbReference type="GO" id="GO:0043335">
    <property type="term" value="P:protein unfolding"/>
    <property type="evidence" value="ECO:0007669"/>
    <property type="project" value="UniProtKB-UniRule"/>
</dbReference>
<dbReference type="CDD" id="cd19502">
    <property type="entry name" value="RecA-like_PAN_like"/>
    <property type="match status" value="1"/>
</dbReference>
<dbReference type="FunFam" id="3.40.50.300:FF:000033">
    <property type="entry name" value="26S protease regulatory subunit 6B"/>
    <property type="match status" value="1"/>
</dbReference>
<dbReference type="FunFam" id="1.10.8.60:FF:000006">
    <property type="entry name" value="26S protease regulatory subunit 8"/>
    <property type="match status" value="1"/>
</dbReference>
<dbReference type="Gene3D" id="1.10.8.60">
    <property type="match status" value="1"/>
</dbReference>
<dbReference type="Gene3D" id="2.40.50.140">
    <property type="entry name" value="Nucleic acid-binding proteins"/>
    <property type="match status" value="1"/>
</dbReference>
<dbReference type="Gene3D" id="3.40.50.300">
    <property type="entry name" value="P-loop containing nucleotide triphosphate hydrolases"/>
    <property type="match status" value="1"/>
</dbReference>
<dbReference type="HAMAP" id="MF_00553">
    <property type="entry name" value="PAN"/>
    <property type="match status" value="1"/>
</dbReference>
<dbReference type="InterPro" id="IPR050221">
    <property type="entry name" value="26S_Proteasome_ATPase"/>
</dbReference>
<dbReference type="InterPro" id="IPR003593">
    <property type="entry name" value="AAA+_ATPase"/>
</dbReference>
<dbReference type="InterPro" id="IPR041569">
    <property type="entry name" value="AAA_lid_3"/>
</dbReference>
<dbReference type="InterPro" id="IPR003959">
    <property type="entry name" value="ATPase_AAA_core"/>
</dbReference>
<dbReference type="InterPro" id="IPR003960">
    <property type="entry name" value="ATPase_AAA_CS"/>
</dbReference>
<dbReference type="InterPro" id="IPR012340">
    <property type="entry name" value="NA-bd_OB-fold"/>
</dbReference>
<dbReference type="InterPro" id="IPR023501">
    <property type="entry name" value="Nucleotidase_PAN"/>
</dbReference>
<dbReference type="InterPro" id="IPR027417">
    <property type="entry name" value="P-loop_NTPase"/>
</dbReference>
<dbReference type="InterPro" id="IPR032501">
    <property type="entry name" value="Prot_ATP_ID_OB_2nd"/>
</dbReference>
<dbReference type="NCBIfam" id="NF003069">
    <property type="entry name" value="PRK03992.1"/>
    <property type="match status" value="1"/>
</dbReference>
<dbReference type="NCBIfam" id="TIGR01242">
    <property type="entry name" value="proteasome-activating nucleotidase"/>
    <property type="match status" value="1"/>
</dbReference>
<dbReference type="PANTHER" id="PTHR23073">
    <property type="entry name" value="26S PROTEASOME REGULATORY SUBUNIT"/>
    <property type="match status" value="1"/>
</dbReference>
<dbReference type="Pfam" id="PF00004">
    <property type="entry name" value="AAA"/>
    <property type="match status" value="1"/>
</dbReference>
<dbReference type="Pfam" id="PF17862">
    <property type="entry name" value="AAA_lid_3"/>
    <property type="match status" value="1"/>
</dbReference>
<dbReference type="Pfam" id="PF16450">
    <property type="entry name" value="Prot_ATP_ID_OB_C"/>
    <property type="match status" value="1"/>
</dbReference>
<dbReference type="SMART" id="SM00382">
    <property type="entry name" value="AAA"/>
    <property type="match status" value="1"/>
</dbReference>
<dbReference type="SUPFAM" id="SSF52540">
    <property type="entry name" value="P-loop containing nucleoside triphosphate hydrolases"/>
    <property type="match status" value="1"/>
</dbReference>
<dbReference type="PROSITE" id="PS00674">
    <property type="entry name" value="AAA"/>
    <property type="match status" value="1"/>
</dbReference>
<sequence>MSIENTDVHPEGYDDYVTFLKRRIRQLELQVRTLEADKERLERELSRLRMEMSRLRQPPAFAGNVIEVLDDERAIVQNYNGPRFVVRIAPWIERDKLKPGARVALDQRTMAIVELLPSEKDPSVLGFEVIERPKVTYNDIGGLEKQLQELREAIELPLKHPELFEQVGIEPPKGVLLYGPPGCGKTLMAKAVANHVNATFIRVVGSELVRKFIGEGARLVHELFELAKEKAPTIIFIDEIDAIGAKRMDETTGGEREVNRTLMQLLAEMDGFDPRGNVKVIAATNRPDILDPALLRPGRFDRLIEVPLPDYQGRLEILKVHTRKMNLKGVDLRVIAEITEGASGADLKAIATEAGMFAIRDRRTYVTQDDFLKAVDKVIGSEKRLAQQIAMHEVMYG</sequence>
<organism>
    <name type="scientific">Thermococcus kodakarensis (strain ATCC BAA-918 / JCM 12380 / KOD1)</name>
    <name type="common">Pyrococcus kodakaraensis (strain KOD1)</name>
    <dbReference type="NCBI Taxonomy" id="69014"/>
    <lineage>
        <taxon>Archaea</taxon>
        <taxon>Methanobacteriati</taxon>
        <taxon>Methanobacteriota</taxon>
        <taxon>Thermococci</taxon>
        <taxon>Thermococcales</taxon>
        <taxon>Thermococcaceae</taxon>
        <taxon>Thermococcus</taxon>
    </lineage>
</organism>
<evidence type="ECO:0000255" key="1">
    <source>
        <dbReference type="HAMAP-Rule" id="MF_00553"/>
    </source>
</evidence>